<accession>Q5ZYM7</accession>
<comment type="function">
    <text evidence="1">This is one of the proteins that bind and probably mediate the attachment of the 5S RNA into the large ribosomal subunit, where it forms part of the central protuberance.</text>
</comment>
<comment type="subunit">
    <text evidence="1">Part of the 50S ribosomal subunit; part of the 5S rRNA/L5/L18/L25 subcomplex. Contacts the 5S and 23S rRNAs.</text>
</comment>
<comment type="similarity">
    <text evidence="1">Belongs to the universal ribosomal protein uL18 family.</text>
</comment>
<comment type="sequence caution" evidence="2">
    <conflict type="erroneous initiation">
        <sequence resource="EMBL-CDS" id="AAU26442"/>
    </conflict>
</comment>
<evidence type="ECO:0000255" key="1">
    <source>
        <dbReference type="HAMAP-Rule" id="MF_01337"/>
    </source>
</evidence>
<evidence type="ECO:0000305" key="2"/>
<feature type="chain" id="PRO_0000131282" description="Large ribosomal subunit protein uL18">
    <location>
        <begin position="1"/>
        <end position="119"/>
    </location>
</feature>
<dbReference type="EMBL" id="AE017354">
    <property type="protein sequence ID" value="AAU26442.1"/>
    <property type="status" value="ALT_INIT"/>
    <property type="molecule type" value="Genomic_DNA"/>
</dbReference>
<dbReference type="RefSeq" id="WP_010946094.1">
    <property type="nucleotide sequence ID" value="NC_002942.5"/>
</dbReference>
<dbReference type="RefSeq" id="YP_094389.2">
    <property type="nucleotide sequence ID" value="NC_002942.5"/>
</dbReference>
<dbReference type="SMR" id="Q5ZYM7"/>
<dbReference type="STRING" id="272624.lpg0345"/>
<dbReference type="PaxDb" id="272624-lpg0345"/>
<dbReference type="GeneID" id="57034348"/>
<dbReference type="KEGG" id="lpn:lpg0345"/>
<dbReference type="eggNOG" id="COG0256">
    <property type="taxonomic scope" value="Bacteria"/>
</dbReference>
<dbReference type="HOGENOM" id="CLU_098841_0_1_6"/>
<dbReference type="OrthoDB" id="9810939at2"/>
<dbReference type="Proteomes" id="UP000000609">
    <property type="component" value="Chromosome"/>
</dbReference>
<dbReference type="GO" id="GO:0022625">
    <property type="term" value="C:cytosolic large ribosomal subunit"/>
    <property type="evidence" value="ECO:0007669"/>
    <property type="project" value="TreeGrafter"/>
</dbReference>
<dbReference type="GO" id="GO:0008097">
    <property type="term" value="F:5S rRNA binding"/>
    <property type="evidence" value="ECO:0007669"/>
    <property type="project" value="TreeGrafter"/>
</dbReference>
<dbReference type="GO" id="GO:0003735">
    <property type="term" value="F:structural constituent of ribosome"/>
    <property type="evidence" value="ECO:0007669"/>
    <property type="project" value="InterPro"/>
</dbReference>
<dbReference type="GO" id="GO:0006412">
    <property type="term" value="P:translation"/>
    <property type="evidence" value="ECO:0007669"/>
    <property type="project" value="UniProtKB-UniRule"/>
</dbReference>
<dbReference type="CDD" id="cd00432">
    <property type="entry name" value="Ribosomal_L18_L5e"/>
    <property type="match status" value="1"/>
</dbReference>
<dbReference type="FunFam" id="3.30.420.100:FF:000001">
    <property type="entry name" value="50S ribosomal protein L18"/>
    <property type="match status" value="1"/>
</dbReference>
<dbReference type="Gene3D" id="3.30.420.100">
    <property type="match status" value="1"/>
</dbReference>
<dbReference type="HAMAP" id="MF_01337_B">
    <property type="entry name" value="Ribosomal_uL18_B"/>
    <property type="match status" value="1"/>
</dbReference>
<dbReference type="InterPro" id="IPR004389">
    <property type="entry name" value="Ribosomal_uL18_bac-type"/>
</dbReference>
<dbReference type="InterPro" id="IPR005484">
    <property type="entry name" value="Ribosomal_uL18_bac/euk"/>
</dbReference>
<dbReference type="NCBIfam" id="TIGR00060">
    <property type="entry name" value="L18_bact"/>
    <property type="match status" value="1"/>
</dbReference>
<dbReference type="PANTHER" id="PTHR12899">
    <property type="entry name" value="39S RIBOSOMAL PROTEIN L18, MITOCHONDRIAL"/>
    <property type="match status" value="1"/>
</dbReference>
<dbReference type="PANTHER" id="PTHR12899:SF3">
    <property type="entry name" value="LARGE RIBOSOMAL SUBUNIT PROTEIN UL18M"/>
    <property type="match status" value="1"/>
</dbReference>
<dbReference type="Pfam" id="PF00861">
    <property type="entry name" value="Ribosomal_L18p"/>
    <property type="match status" value="1"/>
</dbReference>
<dbReference type="SUPFAM" id="SSF53137">
    <property type="entry name" value="Translational machinery components"/>
    <property type="match status" value="1"/>
</dbReference>
<reference key="1">
    <citation type="journal article" date="2004" name="Science">
        <title>The genomic sequence of the accidental pathogen Legionella pneumophila.</title>
        <authorList>
            <person name="Chien M."/>
            <person name="Morozova I."/>
            <person name="Shi S."/>
            <person name="Sheng H."/>
            <person name="Chen J."/>
            <person name="Gomez S.M."/>
            <person name="Asamani G."/>
            <person name="Hill K."/>
            <person name="Nuara J."/>
            <person name="Feder M."/>
            <person name="Rineer J."/>
            <person name="Greenberg J.J."/>
            <person name="Steshenko V."/>
            <person name="Park S.H."/>
            <person name="Zhao B."/>
            <person name="Teplitskaya E."/>
            <person name="Edwards J.R."/>
            <person name="Pampou S."/>
            <person name="Georghiou A."/>
            <person name="Chou I.-C."/>
            <person name="Iannuccilli W."/>
            <person name="Ulz M.E."/>
            <person name="Kim D.H."/>
            <person name="Geringer-Sameth A."/>
            <person name="Goldsberry C."/>
            <person name="Morozov P."/>
            <person name="Fischer S.G."/>
            <person name="Segal G."/>
            <person name="Qu X."/>
            <person name="Rzhetsky A."/>
            <person name="Zhang P."/>
            <person name="Cayanis E."/>
            <person name="De Jong P.J."/>
            <person name="Ju J."/>
            <person name="Kalachikov S."/>
            <person name="Shuman H.A."/>
            <person name="Russo J.J."/>
        </authorList>
    </citation>
    <scope>NUCLEOTIDE SEQUENCE [LARGE SCALE GENOMIC DNA]</scope>
    <source>
        <strain>Philadelphia 1 / ATCC 33152 / DSM 7513</strain>
    </source>
</reference>
<sequence>MNKQNARHRRGLKAKALIRKTGRSRLVVYRSGVHIYSQIVKSDQLGDKVLVASSTIDKELRSSLTGKSKVEQASLVGQLLGKRAKAAGITQVAFDRAGYKYHGRVKALAEGAREAGLDF</sequence>
<proteinExistence type="inferred from homology"/>
<name>RL18_LEGPH</name>
<organism>
    <name type="scientific">Legionella pneumophila subsp. pneumophila (strain Philadelphia 1 / ATCC 33152 / DSM 7513)</name>
    <dbReference type="NCBI Taxonomy" id="272624"/>
    <lineage>
        <taxon>Bacteria</taxon>
        <taxon>Pseudomonadati</taxon>
        <taxon>Pseudomonadota</taxon>
        <taxon>Gammaproteobacteria</taxon>
        <taxon>Legionellales</taxon>
        <taxon>Legionellaceae</taxon>
        <taxon>Legionella</taxon>
    </lineage>
</organism>
<gene>
    <name evidence="1" type="primary">rplR</name>
    <name type="ordered locus">lpg0345</name>
</gene>
<protein>
    <recommendedName>
        <fullName evidence="1">Large ribosomal subunit protein uL18</fullName>
    </recommendedName>
    <alternativeName>
        <fullName evidence="2">50S ribosomal protein L18</fullName>
    </alternativeName>
</protein>
<keyword id="KW-1185">Reference proteome</keyword>
<keyword id="KW-0687">Ribonucleoprotein</keyword>
<keyword id="KW-0689">Ribosomal protein</keyword>
<keyword id="KW-0694">RNA-binding</keyword>
<keyword id="KW-0699">rRNA-binding</keyword>